<organism>
    <name type="scientific">Enterobacter cloacae</name>
    <dbReference type="NCBI Taxonomy" id="550"/>
    <lineage>
        <taxon>Bacteria</taxon>
        <taxon>Pseudomonadati</taxon>
        <taxon>Pseudomonadota</taxon>
        <taxon>Gammaproteobacteria</taxon>
        <taxon>Enterobacterales</taxon>
        <taxon>Enterobacteriaceae</taxon>
        <taxon>Enterobacter</taxon>
        <taxon>Enterobacter cloacae complex</taxon>
    </lineage>
</organism>
<keyword id="KW-0378">Hydrolase</keyword>
<keyword id="KW-0663">Pyridoxal phosphate</keyword>
<comment type="function">
    <text>Catalyzes a cyclopropane ring-opening reaction, the irreversible conversion of 1-aminocyclopropane-1-carboxylate (ACC) to ammonia and alpha-ketobutyrate. Allows growth on ACC as a nitrogen source.</text>
</comment>
<comment type="catalytic activity">
    <reaction evidence="1">
        <text>1-aminocyclopropane-1-carboxylate + H2O = 2-oxobutanoate + NH4(+)</text>
        <dbReference type="Rhea" id="RHEA:16933"/>
        <dbReference type="ChEBI" id="CHEBI:15377"/>
        <dbReference type="ChEBI" id="CHEBI:16763"/>
        <dbReference type="ChEBI" id="CHEBI:28938"/>
        <dbReference type="ChEBI" id="CHEBI:58360"/>
        <dbReference type="EC" id="3.5.99.7"/>
    </reaction>
</comment>
<comment type="cofactor">
    <cofactor>
        <name>pyridoxal 5'-phosphate</name>
        <dbReference type="ChEBI" id="CHEBI:597326"/>
    </cofactor>
</comment>
<comment type="similarity">
    <text evidence="1">Belongs to the ACC deaminase/D-cysteine desulfhydrase family.</text>
</comment>
<reference key="1">
    <citation type="journal article" date="1998" name="Can. J. Microbiol.">
        <title>Isolation and characterization of ACC deaminase genes from two different plant growth-promoting rhizobacteria.</title>
        <authorList>
            <person name="Shah S."/>
            <person name="Li J."/>
            <person name="Moffatt B.A."/>
            <person name="Glick B.R."/>
        </authorList>
    </citation>
    <scope>NUCLEOTIDE SEQUENCE [GENOMIC DNA]</scope>
    <source>
        <strain>CAL2</strain>
    </source>
</reference>
<protein>
    <recommendedName>
        <fullName evidence="1">1-aminocyclopropane-1-carboxylate deaminase</fullName>
        <shortName evidence="1">ACC deaminase</shortName>
        <shortName evidence="1">ACCD</shortName>
        <ecNumber evidence="1">3.5.99.7</ecNumber>
    </recommendedName>
</protein>
<dbReference type="EC" id="3.5.99.7" evidence="1"/>
<dbReference type="EMBL" id="AF047840">
    <property type="protein sequence ID" value="AAD05070.1"/>
    <property type="molecule type" value="Genomic_DNA"/>
</dbReference>
<dbReference type="SMR" id="Q9ZHW3"/>
<dbReference type="BRENDA" id="3.5.99.7">
    <property type="organism ID" value="155"/>
</dbReference>
<dbReference type="GO" id="GO:0008660">
    <property type="term" value="F:1-aminocyclopropane-1-carboxylate deaminase activity"/>
    <property type="evidence" value="ECO:0007669"/>
    <property type="project" value="UniProtKB-UniRule"/>
</dbReference>
<dbReference type="GO" id="GO:0019148">
    <property type="term" value="F:D-cysteine desulfhydrase activity"/>
    <property type="evidence" value="ECO:0007669"/>
    <property type="project" value="TreeGrafter"/>
</dbReference>
<dbReference type="GO" id="GO:0030170">
    <property type="term" value="F:pyridoxal phosphate binding"/>
    <property type="evidence" value="ECO:0007669"/>
    <property type="project" value="InterPro"/>
</dbReference>
<dbReference type="GO" id="GO:0018871">
    <property type="term" value="P:1-aminocyclopropane-1-carboxylate metabolic process"/>
    <property type="evidence" value="ECO:0007669"/>
    <property type="project" value="UniProtKB-UniRule"/>
</dbReference>
<dbReference type="GO" id="GO:0009310">
    <property type="term" value="P:amine catabolic process"/>
    <property type="evidence" value="ECO:0007669"/>
    <property type="project" value="InterPro"/>
</dbReference>
<dbReference type="CDD" id="cd06449">
    <property type="entry name" value="ACCD"/>
    <property type="match status" value="1"/>
</dbReference>
<dbReference type="FunFam" id="3.40.50.1100:FF:000048">
    <property type="entry name" value="1-aminocyclopropane-1-carboxylate deaminase"/>
    <property type="match status" value="1"/>
</dbReference>
<dbReference type="Gene3D" id="3.40.50.1100">
    <property type="match status" value="2"/>
</dbReference>
<dbReference type="HAMAP" id="MF_00807">
    <property type="entry name" value="ACC_deaminase"/>
    <property type="match status" value="1"/>
</dbReference>
<dbReference type="InterPro" id="IPR027278">
    <property type="entry name" value="ACCD_DCysDesulf"/>
</dbReference>
<dbReference type="InterPro" id="IPR005965">
    <property type="entry name" value="ACP_carboxylate_deaminase"/>
</dbReference>
<dbReference type="InterPro" id="IPR020601">
    <property type="entry name" value="ACP_carboxylate_deaminase_bac"/>
</dbReference>
<dbReference type="InterPro" id="IPR001926">
    <property type="entry name" value="TrpB-like_PALP"/>
</dbReference>
<dbReference type="InterPro" id="IPR036052">
    <property type="entry name" value="TrpB-like_PALP_sf"/>
</dbReference>
<dbReference type="NCBIfam" id="TIGR01274">
    <property type="entry name" value="ACC_deam"/>
    <property type="match status" value="1"/>
</dbReference>
<dbReference type="PANTHER" id="PTHR43780">
    <property type="entry name" value="1-AMINOCYCLOPROPANE-1-CARBOXYLATE DEAMINASE-RELATED"/>
    <property type="match status" value="1"/>
</dbReference>
<dbReference type="PANTHER" id="PTHR43780:SF2">
    <property type="entry name" value="1-AMINOCYCLOPROPANE-1-CARBOXYLATE DEAMINASE-RELATED"/>
    <property type="match status" value="1"/>
</dbReference>
<dbReference type="Pfam" id="PF00291">
    <property type="entry name" value="PALP"/>
    <property type="match status" value="1"/>
</dbReference>
<dbReference type="PIRSF" id="PIRSF006278">
    <property type="entry name" value="ACCD_DCysDesulf"/>
    <property type="match status" value="1"/>
</dbReference>
<dbReference type="SUPFAM" id="SSF53686">
    <property type="entry name" value="Tryptophan synthase beta subunit-like PLP-dependent enzymes"/>
    <property type="match status" value="1"/>
</dbReference>
<sequence>MNLNRFERYPLTFGPSPITPLKRLSQHLGGKVELYAKREDCNSGLAFGGNKTRKLEYLIPEAIEQGCDTLVSIGGIQSNQTRQVAAVAAHLGMKCVLVQENWVNYSDAVYDRVGNIEMSRIMGADVRLDAAGFDIGIRPSWEKAMSDVVEQGGKPFPIPAGCSEHPYGGLGFVGFAKKLRQQEKELGFKFNYIVVCSVTGSTQAGMVVGFAADGRSKNVIGVDASAKPEQTKAQILRIARHTAELVELGREITEEDVVLDTRFAYPEYGLPNEGTLEAIRLCGSLEGVLTDPVYEGKSMHGMIEMVRRGEFPEGSKVLYAHLGGAPALNAYSFLFRDG</sequence>
<proteinExistence type="inferred from homology"/>
<accession>Q9ZHW3</accession>
<accession>Q9ZHW4</accession>
<gene>
    <name evidence="1" type="primary">acdS</name>
</gene>
<evidence type="ECO:0000255" key="1">
    <source>
        <dbReference type="HAMAP-Rule" id="MF_00807"/>
    </source>
</evidence>
<feature type="chain" id="PRO_0000184500" description="1-aminocyclopropane-1-carboxylate deaminase">
    <location>
        <begin position="1"/>
        <end position="338"/>
    </location>
</feature>
<feature type="active site" description="Nucleophile" evidence="1">
    <location>
        <position position="78"/>
    </location>
</feature>
<feature type="modified residue" description="N6-(pyridoxal phosphate)lysine" evidence="1">
    <location>
        <position position="51"/>
    </location>
</feature>
<name>1A1D_ENTCL</name>